<dbReference type="EMBL" id="CP000284">
    <property type="protein sequence ID" value="ABE49072.1"/>
    <property type="molecule type" value="Genomic_DNA"/>
</dbReference>
<dbReference type="RefSeq" id="WP_011479169.1">
    <property type="nucleotide sequence ID" value="NC_007947.1"/>
</dbReference>
<dbReference type="SMR" id="Q1H365"/>
<dbReference type="STRING" id="265072.Mfla_0804"/>
<dbReference type="KEGG" id="mfa:Mfla_0804"/>
<dbReference type="eggNOG" id="COG0443">
    <property type="taxonomic scope" value="Bacteria"/>
</dbReference>
<dbReference type="HOGENOM" id="CLU_005965_2_4_4"/>
<dbReference type="OrthoDB" id="9766019at2"/>
<dbReference type="Proteomes" id="UP000002440">
    <property type="component" value="Chromosome"/>
</dbReference>
<dbReference type="GO" id="GO:0005524">
    <property type="term" value="F:ATP binding"/>
    <property type="evidence" value="ECO:0007669"/>
    <property type="project" value="UniProtKB-KW"/>
</dbReference>
<dbReference type="GO" id="GO:0016887">
    <property type="term" value="F:ATP hydrolysis activity"/>
    <property type="evidence" value="ECO:0007669"/>
    <property type="project" value="UniProtKB-UniRule"/>
</dbReference>
<dbReference type="GO" id="GO:0140662">
    <property type="term" value="F:ATP-dependent protein folding chaperone"/>
    <property type="evidence" value="ECO:0007669"/>
    <property type="project" value="InterPro"/>
</dbReference>
<dbReference type="GO" id="GO:0051082">
    <property type="term" value="F:unfolded protein binding"/>
    <property type="evidence" value="ECO:0007669"/>
    <property type="project" value="InterPro"/>
</dbReference>
<dbReference type="GO" id="GO:0016226">
    <property type="term" value="P:iron-sulfur cluster assembly"/>
    <property type="evidence" value="ECO:0007669"/>
    <property type="project" value="InterPro"/>
</dbReference>
<dbReference type="CDD" id="cd10236">
    <property type="entry name" value="ASKHA_NBD_HSP70_HscA"/>
    <property type="match status" value="1"/>
</dbReference>
<dbReference type="FunFam" id="3.30.420.40:FF:000046">
    <property type="entry name" value="Chaperone protein HscA"/>
    <property type="match status" value="1"/>
</dbReference>
<dbReference type="FunFam" id="2.60.34.10:FF:000005">
    <property type="entry name" value="Chaperone protein HscA homolog"/>
    <property type="match status" value="1"/>
</dbReference>
<dbReference type="Gene3D" id="1.20.1270.10">
    <property type="match status" value="1"/>
</dbReference>
<dbReference type="Gene3D" id="3.30.420.40">
    <property type="match status" value="2"/>
</dbReference>
<dbReference type="Gene3D" id="3.90.640.10">
    <property type="entry name" value="Actin, Chain A, domain 4"/>
    <property type="match status" value="1"/>
</dbReference>
<dbReference type="Gene3D" id="2.60.34.10">
    <property type="entry name" value="Substrate Binding Domain Of DNAk, Chain A, domain 1"/>
    <property type="match status" value="1"/>
</dbReference>
<dbReference type="HAMAP" id="MF_00679">
    <property type="entry name" value="HscA"/>
    <property type="match status" value="1"/>
</dbReference>
<dbReference type="InterPro" id="IPR043129">
    <property type="entry name" value="ATPase_NBD"/>
</dbReference>
<dbReference type="InterPro" id="IPR018181">
    <property type="entry name" value="Heat_shock_70_CS"/>
</dbReference>
<dbReference type="InterPro" id="IPR042039">
    <property type="entry name" value="HscA_NBD"/>
</dbReference>
<dbReference type="InterPro" id="IPR029048">
    <property type="entry name" value="HSP70_C_sf"/>
</dbReference>
<dbReference type="InterPro" id="IPR029047">
    <property type="entry name" value="HSP70_peptide-bd_sf"/>
</dbReference>
<dbReference type="InterPro" id="IPR013126">
    <property type="entry name" value="Hsp_70_fam"/>
</dbReference>
<dbReference type="InterPro" id="IPR010236">
    <property type="entry name" value="ISC_FeS_clus_asmbl_HscA"/>
</dbReference>
<dbReference type="NCBIfam" id="TIGR01991">
    <property type="entry name" value="HscA"/>
    <property type="match status" value="1"/>
</dbReference>
<dbReference type="NCBIfam" id="NF003520">
    <property type="entry name" value="PRK05183.1"/>
    <property type="match status" value="1"/>
</dbReference>
<dbReference type="PANTHER" id="PTHR19375">
    <property type="entry name" value="HEAT SHOCK PROTEIN 70KDA"/>
    <property type="match status" value="1"/>
</dbReference>
<dbReference type="Pfam" id="PF00012">
    <property type="entry name" value="HSP70"/>
    <property type="match status" value="1"/>
</dbReference>
<dbReference type="PRINTS" id="PR00301">
    <property type="entry name" value="HEATSHOCK70"/>
</dbReference>
<dbReference type="SUPFAM" id="SSF53067">
    <property type="entry name" value="Actin-like ATPase domain"/>
    <property type="match status" value="2"/>
</dbReference>
<dbReference type="SUPFAM" id="SSF100934">
    <property type="entry name" value="Heat shock protein 70kD (HSP70), C-terminal subdomain"/>
    <property type="match status" value="1"/>
</dbReference>
<dbReference type="SUPFAM" id="SSF100920">
    <property type="entry name" value="Heat shock protein 70kD (HSP70), peptide-binding domain"/>
    <property type="match status" value="1"/>
</dbReference>
<dbReference type="PROSITE" id="PS00297">
    <property type="entry name" value="HSP70_1"/>
    <property type="match status" value="1"/>
</dbReference>
<dbReference type="PROSITE" id="PS00329">
    <property type="entry name" value="HSP70_2"/>
    <property type="match status" value="1"/>
</dbReference>
<dbReference type="PROSITE" id="PS01036">
    <property type="entry name" value="HSP70_3"/>
    <property type="match status" value="1"/>
</dbReference>
<sequence>MALLQISEPGQSTAPHQHRLAVGIDLGTTNSLVATVRSGLSTVLLDEAGKALLPSVVHYAANGQVEVGYAAQRQQSHDPQNTIASAKRFLGRGLNDIGDTSHLPYQFVDVPGMVQIETRAGIKSPVEISAEILKSLKARAEQALGGELTGAVITVPAYFDDAQRQATKDAARIAGINVLRLLNEPTAAAIAYGLDNASEGIYVVYDLGGGTFDVSILRLTKGVFEVLSTNGDSALGGDDFDRRIFHWILEQTHLQAPNPADTRLLMTASKEAKEWLTEHTSANIAVTLSNGKTVDLSLSRTEFHSLTQPLLNRTLVPIRKALRDASLTVKEVKGIVLVGGATRMPQVQQAVADFFGQAPLTNLDPDQVVALGAAIQANILAGNRHDDELLLLDVIPLSLGLETMGGLVEKIIPRNSTLPIARAQDFTTFKDGQTAMSIHVLQGEREMVADCRSLGRFELRGIPPMAAGAARIRVTFQVDADGLLSVSAQEQTSGAHANIVVKPSYGLSEEQITNMLQASFTAAEADKHARALQEARVDAARLLEALEAALRQDGDKLLNDEERTEITRQMEHLRNIAQHEDSDAINKAVDALNHATETFAARRMDASVKQALAGQSLNTLDI</sequence>
<feature type="chain" id="PRO_1000044865" description="Chaperone protein HscA homolog">
    <location>
        <begin position="1"/>
        <end position="622"/>
    </location>
</feature>
<organism>
    <name type="scientific">Methylobacillus flagellatus (strain ATCC 51484 / DSM 6875 / VKM B-1610 / KT)</name>
    <dbReference type="NCBI Taxonomy" id="265072"/>
    <lineage>
        <taxon>Bacteria</taxon>
        <taxon>Pseudomonadati</taxon>
        <taxon>Pseudomonadota</taxon>
        <taxon>Betaproteobacteria</taxon>
        <taxon>Nitrosomonadales</taxon>
        <taxon>Methylophilaceae</taxon>
        <taxon>Methylobacillus</taxon>
    </lineage>
</organism>
<proteinExistence type="inferred from homology"/>
<evidence type="ECO:0000255" key="1">
    <source>
        <dbReference type="HAMAP-Rule" id="MF_00679"/>
    </source>
</evidence>
<name>HSCA_METFK</name>
<keyword id="KW-0067">ATP-binding</keyword>
<keyword id="KW-0143">Chaperone</keyword>
<keyword id="KW-0547">Nucleotide-binding</keyword>
<keyword id="KW-1185">Reference proteome</keyword>
<protein>
    <recommendedName>
        <fullName evidence="1">Chaperone protein HscA homolog</fullName>
    </recommendedName>
</protein>
<comment type="function">
    <text evidence="1">Chaperone involved in the maturation of iron-sulfur cluster-containing proteins. Has a low intrinsic ATPase activity which is markedly stimulated by HscB.</text>
</comment>
<comment type="similarity">
    <text evidence="1">Belongs to the heat shock protein 70 family.</text>
</comment>
<reference key="1">
    <citation type="submission" date="2006-03" db="EMBL/GenBank/DDBJ databases">
        <title>Complete sequence of Methylobacillus flagellatus KT.</title>
        <authorList>
            <consortium name="US DOE Joint Genome Institute"/>
            <person name="Copeland A."/>
            <person name="Lucas S."/>
            <person name="Lapidus A."/>
            <person name="Barry K."/>
            <person name="Detter J.C."/>
            <person name="Glavina del Rio T."/>
            <person name="Hammon N."/>
            <person name="Israni S."/>
            <person name="Dalin E."/>
            <person name="Tice H."/>
            <person name="Pitluck S."/>
            <person name="Brettin T."/>
            <person name="Bruce D."/>
            <person name="Han C."/>
            <person name="Tapia R."/>
            <person name="Saunders E."/>
            <person name="Gilna P."/>
            <person name="Schmutz J."/>
            <person name="Larimer F."/>
            <person name="Land M."/>
            <person name="Kyrpides N."/>
            <person name="Anderson I."/>
            <person name="Richardson P."/>
        </authorList>
    </citation>
    <scope>NUCLEOTIDE SEQUENCE [LARGE SCALE GENOMIC DNA]</scope>
    <source>
        <strain>ATCC 51484 / DSM 6875 / VKM B-1610 / KT</strain>
    </source>
</reference>
<accession>Q1H365</accession>
<gene>
    <name evidence="1" type="primary">hscA</name>
    <name type="ordered locus">Mfla_0804</name>
</gene>